<name>BET11_ARATH</name>
<feature type="chain" id="PRO_0000206887" description="Bet1-like SNARE 1-1">
    <location>
        <begin position="1"/>
        <end position="122"/>
    </location>
</feature>
<feature type="topological domain" description="Cytoplasmic" evidence="2">
    <location>
        <begin position="1"/>
        <end position="103"/>
    </location>
</feature>
<feature type="transmembrane region" description="Helical; Anchor for type IV membrane protein" evidence="2">
    <location>
        <begin position="104"/>
        <end position="121"/>
    </location>
</feature>
<feature type="topological domain" description="Vesicular" evidence="2">
    <location>
        <position position="122"/>
    </location>
</feature>
<feature type="domain" description="t-SNARE coiled-coil homology" evidence="3">
    <location>
        <begin position="32"/>
        <end position="94"/>
    </location>
</feature>
<feature type="modified residue" description="Phosphoserine" evidence="5">
    <location>
        <position position="56"/>
    </location>
</feature>
<evidence type="ECO:0000250" key="1"/>
<evidence type="ECO:0000255" key="2"/>
<evidence type="ECO:0000255" key="3">
    <source>
        <dbReference type="PROSITE-ProRule" id="PRU00202"/>
    </source>
</evidence>
<evidence type="ECO:0000305" key="4"/>
<evidence type="ECO:0007744" key="5">
    <source>
    </source>
</evidence>
<dbReference type="EMBL" id="AF368175">
    <property type="protein sequence ID" value="AAK52976.1"/>
    <property type="molecule type" value="mRNA"/>
</dbReference>
<dbReference type="EMBL" id="AL137081">
    <property type="protein sequence ID" value="CAB68155.1"/>
    <property type="molecule type" value="Genomic_DNA"/>
</dbReference>
<dbReference type="EMBL" id="CP002686">
    <property type="protein sequence ID" value="AEE79750.1"/>
    <property type="molecule type" value="Genomic_DNA"/>
</dbReference>
<dbReference type="EMBL" id="BT004705">
    <property type="protein sequence ID" value="AAO42951.1"/>
    <property type="molecule type" value="mRNA"/>
</dbReference>
<dbReference type="PIR" id="T45977">
    <property type="entry name" value="T45977"/>
</dbReference>
<dbReference type="SMR" id="Q9M2J9"/>
<dbReference type="BioGRID" id="10301">
    <property type="interactions" value="6"/>
</dbReference>
<dbReference type="FunCoup" id="Q9M2J9">
    <property type="interactions" value="3966"/>
</dbReference>
<dbReference type="IntAct" id="Q9M2J9">
    <property type="interactions" value="5"/>
</dbReference>
<dbReference type="STRING" id="3702.Q9M2J9"/>
<dbReference type="iPTMnet" id="Q9M2J9"/>
<dbReference type="PaxDb" id="3702-AT3G58170.1"/>
<dbReference type="ProteomicsDB" id="240330"/>
<dbReference type="EnsemblPlants" id="AT3G58170.1">
    <property type="protein sequence ID" value="AT3G58170.1"/>
    <property type="gene ID" value="AT3G58170"/>
</dbReference>
<dbReference type="GeneID" id="824986"/>
<dbReference type="Gramene" id="AT3G58170.1">
    <property type="protein sequence ID" value="AT3G58170.1"/>
    <property type="gene ID" value="AT3G58170"/>
</dbReference>
<dbReference type="KEGG" id="ath:AT3G58170"/>
<dbReference type="Araport" id="AT3G58170"/>
<dbReference type="TAIR" id="AT3G58170">
    <property type="gene designation" value="BS14A"/>
</dbReference>
<dbReference type="eggNOG" id="KOG3385">
    <property type="taxonomic scope" value="Eukaryota"/>
</dbReference>
<dbReference type="HOGENOM" id="CLU_086133_0_0_1"/>
<dbReference type="InParanoid" id="Q9M2J9"/>
<dbReference type="OMA" id="RLMCYLI"/>
<dbReference type="OrthoDB" id="261831at2759"/>
<dbReference type="PhylomeDB" id="Q9M2J9"/>
<dbReference type="PRO" id="PR:Q9M2J9"/>
<dbReference type="Proteomes" id="UP000006548">
    <property type="component" value="Chromosome 3"/>
</dbReference>
<dbReference type="ExpressionAtlas" id="Q9M2J9">
    <property type="expression patterns" value="baseline and differential"/>
</dbReference>
<dbReference type="GO" id="GO:0005829">
    <property type="term" value="C:cytosol"/>
    <property type="evidence" value="ECO:0007005"/>
    <property type="project" value="TAIR"/>
</dbReference>
<dbReference type="GO" id="GO:0005789">
    <property type="term" value="C:endoplasmic reticulum membrane"/>
    <property type="evidence" value="ECO:0007669"/>
    <property type="project" value="UniProtKB-SubCell"/>
</dbReference>
<dbReference type="GO" id="GO:0000139">
    <property type="term" value="C:Golgi membrane"/>
    <property type="evidence" value="ECO:0007669"/>
    <property type="project" value="UniProtKB-SubCell"/>
</dbReference>
<dbReference type="GO" id="GO:0005886">
    <property type="term" value="C:plasma membrane"/>
    <property type="evidence" value="ECO:0007005"/>
    <property type="project" value="TAIR"/>
</dbReference>
<dbReference type="GO" id="GO:0015031">
    <property type="term" value="P:protein transport"/>
    <property type="evidence" value="ECO:0007669"/>
    <property type="project" value="UniProtKB-KW"/>
</dbReference>
<dbReference type="GO" id="GO:0016192">
    <property type="term" value="P:vesicle-mediated transport"/>
    <property type="evidence" value="ECO:0007669"/>
    <property type="project" value="UniProtKB-KW"/>
</dbReference>
<dbReference type="CDD" id="cd15853">
    <property type="entry name" value="SNARE_Bet1"/>
    <property type="match status" value="1"/>
</dbReference>
<dbReference type="FunFam" id="1.20.5.110:FF:000033">
    <property type="entry name" value="bet1-like SNARE 1-1"/>
    <property type="match status" value="1"/>
</dbReference>
<dbReference type="Gene3D" id="1.20.5.110">
    <property type="match status" value="1"/>
</dbReference>
<dbReference type="InterPro" id="IPR039899">
    <property type="entry name" value="BET1_SNARE"/>
</dbReference>
<dbReference type="InterPro" id="IPR000727">
    <property type="entry name" value="T_SNARE_dom"/>
</dbReference>
<dbReference type="PANTHER" id="PTHR12791">
    <property type="entry name" value="GOLGI SNARE BET1-RELATED"/>
    <property type="match status" value="1"/>
</dbReference>
<dbReference type="SMART" id="SM00397">
    <property type="entry name" value="t_SNARE"/>
    <property type="match status" value="1"/>
</dbReference>
<dbReference type="SUPFAM" id="SSF58038">
    <property type="entry name" value="SNARE fusion complex"/>
    <property type="match status" value="1"/>
</dbReference>
<dbReference type="PROSITE" id="PS50192">
    <property type="entry name" value="T_SNARE"/>
    <property type="match status" value="1"/>
</dbReference>
<proteinExistence type="evidence at protein level"/>
<organism>
    <name type="scientific">Arabidopsis thaliana</name>
    <name type="common">Mouse-ear cress</name>
    <dbReference type="NCBI Taxonomy" id="3702"/>
    <lineage>
        <taxon>Eukaryota</taxon>
        <taxon>Viridiplantae</taxon>
        <taxon>Streptophyta</taxon>
        <taxon>Embryophyta</taxon>
        <taxon>Tracheophyta</taxon>
        <taxon>Spermatophyta</taxon>
        <taxon>Magnoliopsida</taxon>
        <taxon>eudicotyledons</taxon>
        <taxon>Gunneridae</taxon>
        <taxon>Pentapetalae</taxon>
        <taxon>rosids</taxon>
        <taxon>malvids</taxon>
        <taxon>Brassicales</taxon>
        <taxon>Brassicaceae</taxon>
        <taxon>Camelineae</taxon>
        <taxon>Arabidopsis</taxon>
    </lineage>
</organism>
<gene>
    <name type="primary">BET11</name>
    <name type="ordered locus">At3g58170</name>
    <name type="ORF">F9D24.80</name>
</gene>
<accession>Q9M2J9</accession>
<reference key="1">
    <citation type="journal article" date="2001" name="FEBS Lett.">
        <title>AtBS14a and AtBS14b, two Bet1/Sft1-like SNAREs from Arabidopsis thaliana that complement mutations in the yeast SFT1 gene.</title>
        <authorList>
            <person name="Tai W.C.S."/>
            <person name="Banfield D.K."/>
        </authorList>
    </citation>
    <scope>NUCLEOTIDE SEQUENCE [MRNA]</scope>
</reference>
<reference key="2">
    <citation type="journal article" date="2000" name="Nature">
        <title>Sequence and analysis of chromosome 3 of the plant Arabidopsis thaliana.</title>
        <authorList>
            <person name="Salanoubat M."/>
            <person name="Lemcke K."/>
            <person name="Rieger M."/>
            <person name="Ansorge W."/>
            <person name="Unseld M."/>
            <person name="Fartmann B."/>
            <person name="Valle G."/>
            <person name="Bloecker H."/>
            <person name="Perez-Alonso M."/>
            <person name="Obermaier B."/>
            <person name="Delseny M."/>
            <person name="Boutry M."/>
            <person name="Grivell L.A."/>
            <person name="Mache R."/>
            <person name="Puigdomenech P."/>
            <person name="De Simone V."/>
            <person name="Choisne N."/>
            <person name="Artiguenave F."/>
            <person name="Robert C."/>
            <person name="Brottier P."/>
            <person name="Wincker P."/>
            <person name="Cattolico L."/>
            <person name="Weissenbach J."/>
            <person name="Saurin W."/>
            <person name="Quetier F."/>
            <person name="Schaefer M."/>
            <person name="Mueller-Auer S."/>
            <person name="Gabel C."/>
            <person name="Fuchs M."/>
            <person name="Benes V."/>
            <person name="Wurmbach E."/>
            <person name="Drzonek H."/>
            <person name="Erfle H."/>
            <person name="Jordan N."/>
            <person name="Bangert S."/>
            <person name="Wiedelmann R."/>
            <person name="Kranz H."/>
            <person name="Voss H."/>
            <person name="Holland R."/>
            <person name="Brandt P."/>
            <person name="Nyakatura G."/>
            <person name="Vezzi A."/>
            <person name="D'Angelo M."/>
            <person name="Pallavicini A."/>
            <person name="Toppo S."/>
            <person name="Simionati B."/>
            <person name="Conrad A."/>
            <person name="Hornischer K."/>
            <person name="Kauer G."/>
            <person name="Loehnert T.-H."/>
            <person name="Nordsiek G."/>
            <person name="Reichelt J."/>
            <person name="Scharfe M."/>
            <person name="Schoen O."/>
            <person name="Bargues M."/>
            <person name="Terol J."/>
            <person name="Climent J."/>
            <person name="Navarro P."/>
            <person name="Collado C."/>
            <person name="Perez-Perez A."/>
            <person name="Ottenwaelder B."/>
            <person name="Duchemin D."/>
            <person name="Cooke R."/>
            <person name="Laudie M."/>
            <person name="Berger-Llauro C."/>
            <person name="Purnelle B."/>
            <person name="Masuy D."/>
            <person name="de Haan M."/>
            <person name="Maarse A.C."/>
            <person name="Alcaraz J.-P."/>
            <person name="Cottet A."/>
            <person name="Casacuberta E."/>
            <person name="Monfort A."/>
            <person name="Argiriou A."/>
            <person name="Flores M."/>
            <person name="Liguori R."/>
            <person name="Vitale D."/>
            <person name="Mannhaupt G."/>
            <person name="Haase D."/>
            <person name="Schoof H."/>
            <person name="Rudd S."/>
            <person name="Zaccaria P."/>
            <person name="Mewes H.-W."/>
            <person name="Mayer K.F.X."/>
            <person name="Kaul S."/>
            <person name="Town C.D."/>
            <person name="Koo H.L."/>
            <person name="Tallon L.J."/>
            <person name="Jenkins J."/>
            <person name="Rooney T."/>
            <person name="Rizzo M."/>
            <person name="Walts A."/>
            <person name="Utterback T."/>
            <person name="Fujii C.Y."/>
            <person name="Shea T.P."/>
            <person name="Creasy T.H."/>
            <person name="Haas B."/>
            <person name="Maiti R."/>
            <person name="Wu D."/>
            <person name="Peterson J."/>
            <person name="Van Aken S."/>
            <person name="Pai G."/>
            <person name="Militscher J."/>
            <person name="Sellers P."/>
            <person name="Gill J.E."/>
            <person name="Feldblyum T.V."/>
            <person name="Preuss D."/>
            <person name="Lin X."/>
            <person name="Nierman W.C."/>
            <person name="Salzberg S.L."/>
            <person name="White O."/>
            <person name="Venter J.C."/>
            <person name="Fraser C.M."/>
            <person name="Kaneko T."/>
            <person name="Nakamura Y."/>
            <person name="Sato S."/>
            <person name="Kato T."/>
            <person name="Asamizu E."/>
            <person name="Sasamoto S."/>
            <person name="Kimura T."/>
            <person name="Idesawa K."/>
            <person name="Kawashima K."/>
            <person name="Kishida Y."/>
            <person name="Kiyokawa C."/>
            <person name="Kohara M."/>
            <person name="Matsumoto M."/>
            <person name="Matsuno A."/>
            <person name="Muraki A."/>
            <person name="Nakayama S."/>
            <person name="Nakazaki N."/>
            <person name="Shinpo S."/>
            <person name="Takeuchi C."/>
            <person name="Wada T."/>
            <person name="Watanabe A."/>
            <person name="Yamada M."/>
            <person name="Yasuda M."/>
            <person name="Tabata S."/>
        </authorList>
    </citation>
    <scope>NUCLEOTIDE SEQUENCE [LARGE SCALE GENOMIC DNA]</scope>
    <source>
        <strain>cv. Columbia</strain>
    </source>
</reference>
<reference key="3">
    <citation type="journal article" date="2017" name="Plant J.">
        <title>Araport11: a complete reannotation of the Arabidopsis thaliana reference genome.</title>
        <authorList>
            <person name="Cheng C.Y."/>
            <person name="Krishnakumar V."/>
            <person name="Chan A.P."/>
            <person name="Thibaud-Nissen F."/>
            <person name="Schobel S."/>
            <person name="Town C.D."/>
        </authorList>
    </citation>
    <scope>GENOME REANNOTATION</scope>
    <source>
        <strain>cv. Columbia</strain>
    </source>
</reference>
<reference key="4">
    <citation type="journal article" date="2003" name="Science">
        <title>Empirical analysis of transcriptional activity in the Arabidopsis genome.</title>
        <authorList>
            <person name="Yamada K."/>
            <person name="Lim J."/>
            <person name="Dale J.M."/>
            <person name="Chen H."/>
            <person name="Shinn P."/>
            <person name="Palm C.J."/>
            <person name="Southwick A.M."/>
            <person name="Wu H.C."/>
            <person name="Kim C.J."/>
            <person name="Nguyen M."/>
            <person name="Pham P.K."/>
            <person name="Cheuk R.F."/>
            <person name="Karlin-Newmann G."/>
            <person name="Liu S.X."/>
            <person name="Lam B."/>
            <person name="Sakano H."/>
            <person name="Wu T."/>
            <person name="Yu G."/>
            <person name="Miranda M."/>
            <person name="Quach H.L."/>
            <person name="Tripp M."/>
            <person name="Chang C.H."/>
            <person name="Lee J.M."/>
            <person name="Toriumi M.J."/>
            <person name="Chan M.M."/>
            <person name="Tang C.C."/>
            <person name="Onodera C.S."/>
            <person name="Deng J.M."/>
            <person name="Akiyama K."/>
            <person name="Ansari Y."/>
            <person name="Arakawa T."/>
            <person name="Banh J."/>
            <person name="Banno F."/>
            <person name="Bowser L."/>
            <person name="Brooks S.Y."/>
            <person name="Carninci P."/>
            <person name="Chao Q."/>
            <person name="Choy N."/>
            <person name="Enju A."/>
            <person name="Goldsmith A.D."/>
            <person name="Gurjal M."/>
            <person name="Hansen N.F."/>
            <person name="Hayashizaki Y."/>
            <person name="Johnson-Hopson C."/>
            <person name="Hsuan V.W."/>
            <person name="Iida K."/>
            <person name="Karnes M."/>
            <person name="Khan S."/>
            <person name="Koesema E."/>
            <person name="Ishida J."/>
            <person name="Jiang P.X."/>
            <person name="Jones T."/>
            <person name="Kawai J."/>
            <person name="Kamiya A."/>
            <person name="Meyers C."/>
            <person name="Nakajima M."/>
            <person name="Narusaka M."/>
            <person name="Seki M."/>
            <person name="Sakurai T."/>
            <person name="Satou M."/>
            <person name="Tamse R."/>
            <person name="Vaysberg M."/>
            <person name="Wallender E.K."/>
            <person name="Wong C."/>
            <person name="Yamamura Y."/>
            <person name="Yuan S."/>
            <person name="Shinozaki K."/>
            <person name="Davis R.W."/>
            <person name="Theologis A."/>
            <person name="Ecker J.R."/>
        </authorList>
    </citation>
    <scope>NUCLEOTIDE SEQUENCE [LARGE SCALE MRNA]</scope>
    <source>
        <strain>cv. Columbia</strain>
    </source>
</reference>
<reference key="5">
    <citation type="journal article" date="2008" name="J. Proteome Res.">
        <title>Site-specific phosphorylation profiling of Arabidopsis proteins by mass spectrometry and peptide chip analysis.</title>
        <authorList>
            <person name="de la Fuente van Bentem S."/>
            <person name="Anrather D."/>
            <person name="Dohnal I."/>
            <person name="Roitinger E."/>
            <person name="Csaszar E."/>
            <person name="Joore J."/>
            <person name="Buijnink J."/>
            <person name="Carreri A."/>
            <person name="Forzani C."/>
            <person name="Lorkovic Z.J."/>
            <person name="Barta A."/>
            <person name="Lecourieux D."/>
            <person name="Verhounig A."/>
            <person name="Jonak C."/>
            <person name="Hirt H."/>
        </authorList>
    </citation>
    <scope>PHOSPHORYLATION [LARGE SCALE ANALYSIS] AT SER-56</scope>
    <scope>IDENTIFICATION BY MASS SPECTROMETRY [LARGE SCALE ANALYSIS]</scope>
    <source>
        <tissue>Root</tissue>
    </source>
</reference>
<sequence length="122" mass="13973">MNPRREPRGGRSSLFDGIEEGGIRAASSYSHEINEHENERALEGLQDRVILLKRLSGDINEEVDTHNRMLDRMGNDMDSSRGFLSGTMDRFKTVFETKSSRRMLTLVASFVGLFLVIYYLTR</sequence>
<keyword id="KW-0175">Coiled coil</keyword>
<keyword id="KW-0256">Endoplasmic reticulum</keyword>
<keyword id="KW-0931">ER-Golgi transport</keyword>
<keyword id="KW-0333">Golgi apparatus</keyword>
<keyword id="KW-0472">Membrane</keyword>
<keyword id="KW-0597">Phosphoprotein</keyword>
<keyword id="KW-0653">Protein transport</keyword>
<keyword id="KW-1185">Reference proteome</keyword>
<keyword id="KW-0812">Transmembrane</keyword>
<keyword id="KW-1133">Transmembrane helix</keyword>
<keyword id="KW-0813">Transport</keyword>
<protein>
    <recommendedName>
        <fullName>Bet1-like SNARE 1-1</fullName>
        <shortName>AtBET11</shortName>
    </recommendedName>
    <alternativeName>
        <fullName>Bet1/Sft1-like SNARE 14a</fullName>
        <shortName>AtBS14a</shortName>
    </alternativeName>
</protein>
<comment type="function">
    <text evidence="1">Required for vesicular transport from the ER to the Golgi complex. Functions as a SNARE associated with ER-derived vesicles (By similarity).</text>
</comment>
<comment type="subcellular location">
    <subcellularLocation>
        <location evidence="1">Golgi apparatus membrane</location>
        <topology evidence="1">Single-pass type IV membrane protein</topology>
    </subcellularLocation>
    <subcellularLocation>
        <location evidence="1">Endoplasmic reticulum membrane</location>
        <topology evidence="1">Single-pass type IV membrane protein</topology>
    </subcellularLocation>
</comment>
<comment type="similarity">
    <text evidence="4">Belongs to the BET1 family.</text>
</comment>